<keyword id="KW-0106">Calcium</keyword>
<keyword id="KW-0479">Metal-binding</keyword>
<keyword id="KW-1185">Reference proteome</keyword>
<keyword id="KW-0677">Repeat</keyword>
<organism>
    <name type="scientific">Dictyostelium discoideum</name>
    <name type="common">Social amoeba</name>
    <dbReference type="NCBI Taxonomy" id="44689"/>
    <lineage>
        <taxon>Eukaryota</taxon>
        <taxon>Amoebozoa</taxon>
        <taxon>Evosea</taxon>
        <taxon>Eumycetozoa</taxon>
        <taxon>Dictyostelia</taxon>
        <taxon>Dictyosteliales</taxon>
        <taxon>Dictyosteliaceae</taxon>
        <taxon>Dictyostelium</taxon>
    </lineage>
</organism>
<comment type="developmental stage">
    <text evidence="2">Expressed at both slug and early culmination stages.</text>
</comment>
<accession>Q966Q9</accession>
<accession>Q54IN3</accession>
<protein>
    <recommendedName>
        <fullName>Calcium-binding protein H</fullName>
    </recommendedName>
    <alternativeName>
        <fullName>Calcium-binding protein 8</fullName>
    </alternativeName>
</protein>
<name>CBPH_DICDI</name>
<feature type="chain" id="PRO_0000323771" description="Calcium-binding protein H">
    <location>
        <begin position="1"/>
        <end position="165"/>
    </location>
</feature>
<feature type="domain" description="EF-hand 1" evidence="1">
    <location>
        <begin position="7"/>
        <end position="42"/>
    </location>
</feature>
<feature type="domain" description="EF-hand 2" evidence="1">
    <location>
        <begin position="43"/>
        <end position="78"/>
    </location>
</feature>
<feature type="domain" description="EF-hand 3" evidence="1">
    <location>
        <begin position="88"/>
        <end position="123"/>
    </location>
</feature>
<feature type="domain" description="EF-hand 4" evidence="1">
    <location>
        <begin position="124"/>
        <end position="159"/>
    </location>
</feature>
<feature type="binding site" evidence="3">
    <location>
        <position position="20"/>
    </location>
    <ligand>
        <name>Ca(2+)</name>
        <dbReference type="ChEBI" id="CHEBI:29108"/>
        <label>1</label>
    </ligand>
</feature>
<feature type="binding site" evidence="3">
    <location>
        <position position="22"/>
    </location>
    <ligand>
        <name>Ca(2+)</name>
        <dbReference type="ChEBI" id="CHEBI:29108"/>
        <label>1</label>
    </ligand>
</feature>
<feature type="binding site" evidence="3">
    <location>
        <position position="24"/>
    </location>
    <ligand>
        <name>Ca(2+)</name>
        <dbReference type="ChEBI" id="CHEBI:29108"/>
        <label>1</label>
    </ligand>
</feature>
<feature type="binding site" evidence="3">
    <location>
        <position position="26"/>
    </location>
    <ligand>
        <name>Ca(2+)</name>
        <dbReference type="ChEBI" id="CHEBI:29108"/>
        <label>1</label>
    </ligand>
</feature>
<feature type="binding site" evidence="3">
    <location>
        <position position="31"/>
    </location>
    <ligand>
        <name>Ca(2+)</name>
        <dbReference type="ChEBI" id="CHEBI:29108"/>
        <label>1</label>
    </ligand>
</feature>
<feature type="binding site" evidence="1">
    <location>
        <position position="56"/>
    </location>
    <ligand>
        <name>Ca(2+)</name>
        <dbReference type="ChEBI" id="CHEBI:29108"/>
        <label>2</label>
    </ligand>
</feature>
<feature type="binding site" evidence="1">
    <location>
        <position position="58"/>
    </location>
    <ligand>
        <name>Ca(2+)</name>
        <dbReference type="ChEBI" id="CHEBI:29108"/>
        <label>2</label>
    </ligand>
</feature>
<feature type="binding site" evidence="1">
    <location>
        <position position="60"/>
    </location>
    <ligand>
        <name>Ca(2+)</name>
        <dbReference type="ChEBI" id="CHEBI:29108"/>
        <label>2</label>
    </ligand>
</feature>
<feature type="binding site" evidence="1">
    <location>
        <position position="62"/>
    </location>
    <ligand>
        <name>Ca(2+)</name>
        <dbReference type="ChEBI" id="CHEBI:29108"/>
        <label>2</label>
    </ligand>
</feature>
<feature type="binding site" evidence="1">
    <location>
        <position position="67"/>
    </location>
    <ligand>
        <name>Ca(2+)</name>
        <dbReference type="ChEBI" id="CHEBI:29108"/>
        <label>2</label>
    </ligand>
</feature>
<feature type="binding site" evidence="1">
    <location>
        <position position="101"/>
    </location>
    <ligand>
        <name>Ca(2+)</name>
        <dbReference type="ChEBI" id="CHEBI:29108"/>
        <label>3</label>
    </ligand>
</feature>
<feature type="binding site" evidence="1">
    <location>
        <position position="103"/>
    </location>
    <ligand>
        <name>Ca(2+)</name>
        <dbReference type="ChEBI" id="CHEBI:29108"/>
        <label>3</label>
    </ligand>
</feature>
<feature type="binding site" evidence="1">
    <location>
        <position position="105"/>
    </location>
    <ligand>
        <name>Ca(2+)</name>
        <dbReference type="ChEBI" id="CHEBI:29108"/>
        <label>3</label>
    </ligand>
</feature>
<feature type="binding site" evidence="1">
    <location>
        <position position="107"/>
    </location>
    <ligand>
        <name>Ca(2+)</name>
        <dbReference type="ChEBI" id="CHEBI:29108"/>
        <label>3</label>
    </ligand>
</feature>
<feature type="binding site" evidence="1">
    <location>
        <position position="112"/>
    </location>
    <ligand>
        <name>Ca(2+)</name>
        <dbReference type="ChEBI" id="CHEBI:29108"/>
        <label>3</label>
    </ligand>
</feature>
<feature type="binding site" evidence="1">
    <location>
        <position position="137"/>
    </location>
    <ligand>
        <name>Ca(2+)</name>
        <dbReference type="ChEBI" id="CHEBI:29108"/>
        <label>4</label>
    </ligand>
</feature>
<feature type="binding site" evidence="1">
    <location>
        <position position="139"/>
    </location>
    <ligand>
        <name>Ca(2+)</name>
        <dbReference type="ChEBI" id="CHEBI:29108"/>
        <label>4</label>
    </ligand>
</feature>
<feature type="binding site" evidence="1">
    <location>
        <position position="141"/>
    </location>
    <ligand>
        <name>Ca(2+)</name>
        <dbReference type="ChEBI" id="CHEBI:29108"/>
        <label>4</label>
    </ligand>
</feature>
<feature type="binding site" evidence="1">
    <location>
        <position position="143"/>
    </location>
    <ligand>
        <name>Ca(2+)</name>
        <dbReference type="ChEBI" id="CHEBI:29108"/>
        <label>4</label>
    </ligand>
</feature>
<feature type="binding site" evidence="1">
    <location>
        <position position="148"/>
    </location>
    <ligand>
        <name>Ca(2+)</name>
        <dbReference type="ChEBI" id="CHEBI:29108"/>
        <label>4</label>
    </ligand>
</feature>
<reference key="1">
    <citation type="journal article" date="2003" name="Dev. Growth Differ.">
        <title>Identification and characterization of novel calcium-binding proteins of Dictyostelium and their spatial expression patterns during development.</title>
        <authorList>
            <person name="Sakamoto H."/>
            <person name="Nishio K."/>
            <person name="Tomisako M."/>
            <person name="Kuwayama H."/>
            <person name="Tanaka Y."/>
            <person name="Suetake I."/>
            <person name="Tajima S."/>
            <person name="Ogihara S."/>
            <person name="Coukell B."/>
            <person name="Maeda M."/>
        </authorList>
    </citation>
    <scope>NUCLEOTIDE SEQUENCE [MRNA]</scope>
    <scope>CALCIUM-BINDING</scope>
    <scope>DEVELOPMENTAL STAGE</scope>
    <source>
        <strain>AX4</strain>
    </source>
</reference>
<reference key="2">
    <citation type="journal article" date="2005" name="Nature">
        <title>The genome of the social amoeba Dictyostelium discoideum.</title>
        <authorList>
            <person name="Eichinger L."/>
            <person name="Pachebat J.A."/>
            <person name="Gloeckner G."/>
            <person name="Rajandream M.A."/>
            <person name="Sucgang R."/>
            <person name="Berriman M."/>
            <person name="Song J."/>
            <person name="Olsen R."/>
            <person name="Szafranski K."/>
            <person name="Xu Q."/>
            <person name="Tunggal B."/>
            <person name="Kummerfeld S."/>
            <person name="Madera M."/>
            <person name="Konfortov B.A."/>
            <person name="Rivero F."/>
            <person name="Bankier A.T."/>
            <person name="Lehmann R."/>
            <person name="Hamlin N."/>
            <person name="Davies R."/>
            <person name="Gaudet P."/>
            <person name="Fey P."/>
            <person name="Pilcher K."/>
            <person name="Chen G."/>
            <person name="Saunders D."/>
            <person name="Sodergren E.J."/>
            <person name="Davis P."/>
            <person name="Kerhornou A."/>
            <person name="Nie X."/>
            <person name="Hall N."/>
            <person name="Anjard C."/>
            <person name="Hemphill L."/>
            <person name="Bason N."/>
            <person name="Farbrother P."/>
            <person name="Desany B."/>
            <person name="Just E."/>
            <person name="Morio T."/>
            <person name="Rost R."/>
            <person name="Churcher C.M."/>
            <person name="Cooper J."/>
            <person name="Haydock S."/>
            <person name="van Driessche N."/>
            <person name="Cronin A."/>
            <person name="Goodhead I."/>
            <person name="Muzny D.M."/>
            <person name="Mourier T."/>
            <person name="Pain A."/>
            <person name="Lu M."/>
            <person name="Harper D."/>
            <person name="Lindsay R."/>
            <person name="Hauser H."/>
            <person name="James K.D."/>
            <person name="Quiles M."/>
            <person name="Madan Babu M."/>
            <person name="Saito T."/>
            <person name="Buchrieser C."/>
            <person name="Wardroper A."/>
            <person name="Felder M."/>
            <person name="Thangavelu M."/>
            <person name="Johnson D."/>
            <person name="Knights A."/>
            <person name="Loulseged H."/>
            <person name="Mungall K.L."/>
            <person name="Oliver K."/>
            <person name="Price C."/>
            <person name="Quail M.A."/>
            <person name="Urushihara H."/>
            <person name="Hernandez J."/>
            <person name="Rabbinowitsch E."/>
            <person name="Steffen D."/>
            <person name="Sanders M."/>
            <person name="Ma J."/>
            <person name="Kohara Y."/>
            <person name="Sharp S."/>
            <person name="Simmonds M.N."/>
            <person name="Spiegler S."/>
            <person name="Tivey A."/>
            <person name="Sugano S."/>
            <person name="White B."/>
            <person name="Walker D."/>
            <person name="Woodward J.R."/>
            <person name="Winckler T."/>
            <person name="Tanaka Y."/>
            <person name="Shaulsky G."/>
            <person name="Schleicher M."/>
            <person name="Weinstock G.M."/>
            <person name="Rosenthal A."/>
            <person name="Cox E.C."/>
            <person name="Chisholm R.L."/>
            <person name="Gibbs R.A."/>
            <person name="Loomis W.F."/>
            <person name="Platzer M."/>
            <person name="Kay R.R."/>
            <person name="Williams J.G."/>
            <person name="Dear P.H."/>
            <person name="Noegel A.A."/>
            <person name="Barrell B.G."/>
            <person name="Kuspa A."/>
        </authorList>
    </citation>
    <scope>NUCLEOTIDE SEQUENCE [LARGE SCALE GENOMIC DNA]</scope>
    <source>
        <strain>AX4</strain>
    </source>
</reference>
<proteinExistence type="evidence at protein level"/>
<gene>
    <name type="primary">cbpH</name>
    <name type="synonym">cbp8</name>
    <name type="ORF">DDB_G0288623</name>
</gene>
<dbReference type="EMBL" id="AB070451">
    <property type="protein sequence ID" value="BAB63909.1"/>
    <property type="molecule type" value="mRNA"/>
</dbReference>
<dbReference type="EMBL" id="AAFI02000119">
    <property type="protein sequence ID" value="EAL63115.1"/>
    <property type="molecule type" value="Genomic_DNA"/>
</dbReference>
<dbReference type="RefSeq" id="XP_636625.1">
    <property type="nucleotide sequence ID" value="XM_631533.1"/>
</dbReference>
<dbReference type="SMR" id="Q966Q9"/>
<dbReference type="FunCoup" id="Q966Q9">
    <property type="interactions" value="1"/>
</dbReference>
<dbReference type="STRING" id="44689.Q966Q9"/>
<dbReference type="PaxDb" id="44689-DDB0191153"/>
<dbReference type="EnsemblProtists" id="EAL63115">
    <property type="protein sequence ID" value="EAL63115"/>
    <property type="gene ID" value="DDB_G0288623"/>
</dbReference>
<dbReference type="GeneID" id="8626727"/>
<dbReference type="KEGG" id="ddi:DDB_G0288623"/>
<dbReference type="dictyBase" id="DDB_G0288623">
    <property type="gene designation" value="cbpH"/>
</dbReference>
<dbReference type="VEuPathDB" id="AmoebaDB:DDB_G0288623"/>
<dbReference type="eggNOG" id="ENOG502RI75">
    <property type="taxonomic scope" value="Eukaryota"/>
</dbReference>
<dbReference type="HOGENOM" id="CLU_1630084_0_0_1"/>
<dbReference type="InParanoid" id="Q966Q9"/>
<dbReference type="OMA" id="HPKENAN"/>
<dbReference type="PhylomeDB" id="Q966Q9"/>
<dbReference type="PRO" id="PR:Q966Q9"/>
<dbReference type="Proteomes" id="UP000002195">
    <property type="component" value="Chromosome 5"/>
</dbReference>
<dbReference type="GO" id="GO:0005509">
    <property type="term" value="F:calcium ion binding"/>
    <property type="evidence" value="ECO:0000314"/>
    <property type="project" value="dictyBase"/>
</dbReference>
<dbReference type="FunFam" id="1.10.238.10:FF:000501">
    <property type="entry name" value="Calcium-binding protein 4a"/>
    <property type="match status" value="2"/>
</dbReference>
<dbReference type="Gene3D" id="1.10.238.10">
    <property type="entry name" value="EF-hand"/>
    <property type="match status" value="2"/>
</dbReference>
<dbReference type="InterPro" id="IPR011992">
    <property type="entry name" value="EF-hand-dom_pair"/>
</dbReference>
<dbReference type="InterPro" id="IPR018247">
    <property type="entry name" value="EF_Hand_1_Ca_BS"/>
</dbReference>
<dbReference type="InterPro" id="IPR002048">
    <property type="entry name" value="EF_hand_dom"/>
</dbReference>
<dbReference type="PANTHER" id="PTHR10827:SF85">
    <property type="entry name" value="CALCIUM-BINDING PROTEIN"/>
    <property type="match status" value="1"/>
</dbReference>
<dbReference type="PANTHER" id="PTHR10827">
    <property type="entry name" value="RETICULOCALBIN"/>
    <property type="match status" value="1"/>
</dbReference>
<dbReference type="Pfam" id="PF13499">
    <property type="entry name" value="EF-hand_7"/>
    <property type="match status" value="1"/>
</dbReference>
<dbReference type="Pfam" id="PF13833">
    <property type="entry name" value="EF-hand_8"/>
    <property type="match status" value="1"/>
</dbReference>
<dbReference type="SMART" id="SM00054">
    <property type="entry name" value="EFh"/>
    <property type="match status" value="4"/>
</dbReference>
<dbReference type="SUPFAM" id="SSF47473">
    <property type="entry name" value="EF-hand"/>
    <property type="match status" value="1"/>
</dbReference>
<dbReference type="PROSITE" id="PS00018">
    <property type="entry name" value="EF_HAND_1"/>
    <property type="match status" value="3"/>
</dbReference>
<dbReference type="PROSITE" id="PS50222">
    <property type="entry name" value="EF_HAND_2"/>
    <property type="match status" value="4"/>
</dbReference>
<sequence length="165" mass="19893">MSRIYEQIEKDVEKIIGQYDGDKNGEVTINEAIEFFKRMGSKYPEKCAIVLFKMYDLDNEGKISYDEIQEEIFKRYQDKVREDQIKQYFQDDIEAFLLRYDKNRDNRIDFKELEQCFESIGSDHPKENANHIFTEIDKNRDGYLTIAEIKNYCRNTIRSKPYYQS</sequence>
<evidence type="ECO:0000255" key="1">
    <source>
        <dbReference type="PROSITE-ProRule" id="PRU00448"/>
    </source>
</evidence>
<evidence type="ECO:0000269" key="2">
    <source>
    </source>
</evidence>
<evidence type="ECO:0000305" key="3"/>